<accession>Q4K6J0</accession>
<name>MRAY_PSEF5</name>
<protein>
    <recommendedName>
        <fullName evidence="1">Phospho-N-acetylmuramoyl-pentapeptide-transferase</fullName>
        <ecNumber evidence="1">2.7.8.13</ecNumber>
    </recommendedName>
    <alternativeName>
        <fullName evidence="1">UDP-MurNAc-pentapeptide phosphotransferase</fullName>
    </alternativeName>
</protein>
<gene>
    <name evidence="1" type="primary">mraY</name>
    <name type="ordered locus">PFL_5064</name>
</gene>
<reference key="1">
    <citation type="journal article" date="2005" name="Nat. Biotechnol.">
        <title>Complete genome sequence of the plant commensal Pseudomonas fluorescens Pf-5.</title>
        <authorList>
            <person name="Paulsen I.T."/>
            <person name="Press C.M."/>
            <person name="Ravel J."/>
            <person name="Kobayashi D.Y."/>
            <person name="Myers G.S.A."/>
            <person name="Mavrodi D.V."/>
            <person name="DeBoy R.T."/>
            <person name="Seshadri R."/>
            <person name="Ren Q."/>
            <person name="Madupu R."/>
            <person name="Dodson R.J."/>
            <person name="Durkin A.S."/>
            <person name="Brinkac L.M."/>
            <person name="Daugherty S.C."/>
            <person name="Sullivan S.A."/>
            <person name="Rosovitz M.J."/>
            <person name="Gwinn M.L."/>
            <person name="Zhou L."/>
            <person name="Schneider D.J."/>
            <person name="Cartinhour S.W."/>
            <person name="Nelson W.C."/>
            <person name="Weidman J."/>
            <person name="Watkins K."/>
            <person name="Tran K."/>
            <person name="Khouri H."/>
            <person name="Pierson E.A."/>
            <person name="Pierson L.S. III"/>
            <person name="Thomashow L.S."/>
            <person name="Loper J.E."/>
        </authorList>
    </citation>
    <scope>NUCLEOTIDE SEQUENCE [LARGE SCALE GENOMIC DNA]</scope>
    <source>
        <strain>ATCC BAA-477 / NRRL B-23932 / Pf-5</strain>
    </source>
</reference>
<feature type="chain" id="PRO_0000235469" description="Phospho-N-acetylmuramoyl-pentapeptide-transferase">
    <location>
        <begin position="1"/>
        <end position="360"/>
    </location>
</feature>
<feature type="transmembrane region" description="Helical" evidence="1">
    <location>
        <begin position="25"/>
        <end position="45"/>
    </location>
</feature>
<feature type="transmembrane region" description="Helical" evidence="1">
    <location>
        <begin position="73"/>
        <end position="93"/>
    </location>
</feature>
<feature type="transmembrane region" description="Helical" evidence="1">
    <location>
        <begin position="97"/>
        <end position="117"/>
    </location>
</feature>
<feature type="transmembrane region" description="Helical" evidence="1">
    <location>
        <begin position="132"/>
        <end position="152"/>
    </location>
</feature>
<feature type="transmembrane region" description="Helical" evidence="1">
    <location>
        <begin position="168"/>
        <end position="188"/>
    </location>
</feature>
<feature type="transmembrane region" description="Helical" evidence="1">
    <location>
        <begin position="199"/>
        <end position="219"/>
    </location>
</feature>
<feature type="transmembrane region" description="Helical" evidence="1">
    <location>
        <begin position="236"/>
        <end position="256"/>
    </location>
</feature>
<feature type="transmembrane region" description="Helical" evidence="1">
    <location>
        <begin position="263"/>
        <end position="283"/>
    </location>
</feature>
<feature type="transmembrane region" description="Helical" evidence="1">
    <location>
        <begin position="288"/>
        <end position="308"/>
    </location>
</feature>
<feature type="transmembrane region" description="Helical" evidence="1">
    <location>
        <begin position="338"/>
        <end position="358"/>
    </location>
</feature>
<organism>
    <name type="scientific">Pseudomonas fluorescens (strain ATCC BAA-477 / NRRL B-23932 / Pf-5)</name>
    <dbReference type="NCBI Taxonomy" id="220664"/>
    <lineage>
        <taxon>Bacteria</taxon>
        <taxon>Pseudomonadati</taxon>
        <taxon>Pseudomonadota</taxon>
        <taxon>Gammaproteobacteria</taxon>
        <taxon>Pseudomonadales</taxon>
        <taxon>Pseudomonadaceae</taxon>
        <taxon>Pseudomonas</taxon>
    </lineage>
</organism>
<dbReference type="EC" id="2.7.8.13" evidence="1"/>
<dbReference type="EMBL" id="CP000076">
    <property type="protein sequence ID" value="AAY94292.1"/>
    <property type="molecule type" value="Genomic_DNA"/>
</dbReference>
<dbReference type="RefSeq" id="WP_011063313.1">
    <property type="nucleotide sequence ID" value="NC_004129.6"/>
</dbReference>
<dbReference type="SMR" id="Q4K6J0"/>
<dbReference type="STRING" id="220664.PFL_5064"/>
<dbReference type="GeneID" id="57478036"/>
<dbReference type="KEGG" id="pfl:PFL_5064"/>
<dbReference type="PATRIC" id="fig|220664.5.peg.5182"/>
<dbReference type="eggNOG" id="COG0472">
    <property type="taxonomic scope" value="Bacteria"/>
</dbReference>
<dbReference type="HOGENOM" id="CLU_023982_0_0_6"/>
<dbReference type="UniPathway" id="UPA00219"/>
<dbReference type="Proteomes" id="UP000008540">
    <property type="component" value="Chromosome"/>
</dbReference>
<dbReference type="GO" id="GO:0005886">
    <property type="term" value="C:plasma membrane"/>
    <property type="evidence" value="ECO:0007669"/>
    <property type="project" value="UniProtKB-SubCell"/>
</dbReference>
<dbReference type="GO" id="GO:0046872">
    <property type="term" value="F:metal ion binding"/>
    <property type="evidence" value="ECO:0007669"/>
    <property type="project" value="UniProtKB-KW"/>
</dbReference>
<dbReference type="GO" id="GO:0008963">
    <property type="term" value="F:phospho-N-acetylmuramoyl-pentapeptide-transferase activity"/>
    <property type="evidence" value="ECO:0007669"/>
    <property type="project" value="UniProtKB-UniRule"/>
</dbReference>
<dbReference type="GO" id="GO:0051992">
    <property type="term" value="F:UDP-N-acetylmuramoyl-L-alanyl-D-glutamyl-meso-2,6-diaminopimelyl-D-alanyl-D-alanine:undecaprenyl-phosphate transferase activity"/>
    <property type="evidence" value="ECO:0007669"/>
    <property type="project" value="RHEA"/>
</dbReference>
<dbReference type="GO" id="GO:0051301">
    <property type="term" value="P:cell division"/>
    <property type="evidence" value="ECO:0007669"/>
    <property type="project" value="UniProtKB-KW"/>
</dbReference>
<dbReference type="GO" id="GO:0071555">
    <property type="term" value="P:cell wall organization"/>
    <property type="evidence" value="ECO:0007669"/>
    <property type="project" value="UniProtKB-KW"/>
</dbReference>
<dbReference type="GO" id="GO:0009252">
    <property type="term" value="P:peptidoglycan biosynthetic process"/>
    <property type="evidence" value="ECO:0007669"/>
    <property type="project" value="UniProtKB-UniRule"/>
</dbReference>
<dbReference type="GO" id="GO:0008360">
    <property type="term" value="P:regulation of cell shape"/>
    <property type="evidence" value="ECO:0007669"/>
    <property type="project" value="UniProtKB-KW"/>
</dbReference>
<dbReference type="CDD" id="cd06852">
    <property type="entry name" value="GT_MraY"/>
    <property type="match status" value="1"/>
</dbReference>
<dbReference type="HAMAP" id="MF_00038">
    <property type="entry name" value="MraY"/>
    <property type="match status" value="1"/>
</dbReference>
<dbReference type="InterPro" id="IPR000715">
    <property type="entry name" value="Glycosyl_transferase_4"/>
</dbReference>
<dbReference type="InterPro" id="IPR003524">
    <property type="entry name" value="PNAcMuramoyl-5peptid_Trfase"/>
</dbReference>
<dbReference type="InterPro" id="IPR018480">
    <property type="entry name" value="PNAcMuramoyl-5peptid_Trfase_CS"/>
</dbReference>
<dbReference type="NCBIfam" id="TIGR00445">
    <property type="entry name" value="mraY"/>
    <property type="match status" value="1"/>
</dbReference>
<dbReference type="PANTHER" id="PTHR22926">
    <property type="entry name" value="PHOSPHO-N-ACETYLMURAMOYL-PENTAPEPTIDE-TRANSFERASE"/>
    <property type="match status" value="1"/>
</dbReference>
<dbReference type="PANTHER" id="PTHR22926:SF5">
    <property type="entry name" value="PHOSPHO-N-ACETYLMURAMOYL-PENTAPEPTIDE-TRANSFERASE HOMOLOG"/>
    <property type="match status" value="1"/>
</dbReference>
<dbReference type="Pfam" id="PF00953">
    <property type="entry name" value="Glycos_transf_4"/>
    <property type="match status" value="1"/>
</dbReference>
<dbReference type="Pfam" id="PF10555">
    <property type="entry name" value="MraY_sig1"/>
    <property type="match status" value="1"/>
</dbReference>
<dbReference type="PROSITE" id="PS01347">
    <property type="entry name" value="MRAY_1"/>
    <property type="match status" value="1"/>
</dbReference>
<dbReference type="PROSITE" id="PS01348">
    <property type="entry name" value="MRAY_2"/>
    <property type="match status" value="1"/>
</dbReference>
<comment type="function">
    <text evidence="1">Catalyzes the initial step of the lipid cycle reactions in the biosynthesis of the cell wall peptidoglycan: transfers peptidoglycan precursor phospho-MurNAc-pentapeptide from UDP-MurNAc-pentapeptide onto the lipid carrier undecaprenyl phosphate, yielding undecaprenyl-pyrophosphoryl-MurNAc-pentapeptide, known as lipid I.</text>
</comment>
<comment type="catalytic activity">
    <reaction evidence="1">
        <text>UDP-N-acetyl-alpha-D-muramoyl-L-alanyl-gamma-D-glutamyl-meso-2,6-diaminopimeloyl-D-alanyl-D-alanine + di-trans,octa-cis-undecaprenyl phosphate = di-trans,octa-cis-undecaprenyl diphospho-N-acetyl-alpha-D-muramoyl-L-alanyl-D-glutamyl-meso-2,6-diaminopimeloyl-D-alanyl-D-alanine + UMP</text>
        <dbReference type="Rhea" id="RHEA:28386"/>
        <dbReference type="ChEBI" id="CHEBI:57865"/>
        <dbReference type="ChEBI" id="CHEBI:60392"/>
        <dbReference type="ChEBI" id="CHEBI:61386"/>
        <dbReference type="ChEBI" id="CHEBI:61387"/>
        <dbReference type="EC" id="2.7.8.13"/>
    </reaction>
</comment>
<comment type="cofactor">
    <cofactor evidence="1">
        <name>Mg(2+)</name>
        <dbReference type="ChEBI" id="CHEBI:18420"/>
    </cofactor>
</comment>
<comment type="pathway">
    <text evidence="1">Cell wall biogenesis; peptidoglycan biosynthesis.</text>
</comment>
<comment type="subcellular location">
    <subcellularLocation>
        <location evidence="1">Cell inner membrane</location>
        <topology evidence="1">Multi-pass membrane protein</topology>
    </subcellularLocation>
</comment>
<comment type="similarity">
    <text evidence="1">Belongs to the glycosyltransferase 4 family. MraY subfamily.</text>
</comment>
<keyword id="KW-0131">Cell cycle</keyword>
<keyword id="KW-0132">Cell division</keyword>
<keyword id="KW-0997">Cell inner membrane</keyword>
<keyword id="KW-1003">Cell membrane</keyword>
<keyword id="KW-0133">Cell shape</keyword>
<keyword id="KW-0961">Cell wall biogenesis/degradation</keyword>
<keyword id="KW-0460">Magnesium</keyword>
<keyword id="KW-0472">Membrane</keyword>
<keyword id="KW-0479">Metal-binding</keyword>
<keyword id="KW-0573">Peptidoglycan synthesis</keyword>
<keyword id="KW-0808">Transferase</keyword>
<keyword id="KW-0812">Transmembrane</keyword>
<keyword id="KW-1133">Transmembrane helix</keyword>
<evidence type="ECO:0000255" key="1">
    <source>
        <dbReference type="HAMAP-Rule" id="MF_00038"/>
    </source>
</evidence>
<proteinExistence type="inferred from homology"/>
<sequence>MLLLLAEYLQQFYKGFAVFQYLTLRGILGVLTALSLALCLGPWMIRTLQNRQIGQSVRNDGPQSHLSKSGTPTMGGALILSAIGISTLLWADLRNHYVWVVLLVTLAFGAIGWVDDYRKVIEKNSRGLPSRWKYFWQSVFGLGAAIFLYMTAQSPVETTLLIPMLKDVSIPLGIGFVVLTYFVIVGSSNAVNLTDGLDGLAIMPTVMVGGALGIFCYLSGNVKFAEYLLIPYVPGAGELIVFCGALIGAGLGFLWFNTYPAQVFMGDVGALALGAALGTIAVIVRQEIVLFIMGGVFVMETLSVVIQVASFKLTGRRVFRMAPIHHHFELKGWPEPRVIVRFWIITVILVLIGLATLKLR</sequence>